<name>LYS4_CANPA</name>
<gene>
    <name type="primary">LYS4</name>
</gene>
<comment type="function">
    <text evidence="1">Catalyzes the reversible hydration of cis-homoaconitate to (2R,3S)-homoisocitrate, a step in the alpha-aminoadipate pathway for lysine biosynthesis.</text>
</comment>
<comment type="catalytic activity">
    <reaction>
        <text>(2R,3S)-homoisocitrate = cis-homoaconitate + H2O</text>
        <dbReference type="Rhea" id="RHEA:15485"/>
        <dbReference type="ChEBI" id="CHEBI:15377"/>
        <dbReference type="ChEBI" id="CHEBI:15404"/>
        <dbReference type="ChEBI" id="CHEBI:58174"/>
        <dbReference type="EC" id="4.2.1.36"/>
    </reaction>
</comment>
<comment type="cofactor">
    <cofactor evidence="1">
        <name>[4Fe-4S] cluster</name>
        <dbReference type="ChEBI" id="CHEBI:49883"/>
    </cofactor>
    <text evidence="1">Binds 1 [4Fe-4S] cluster per subunit.</text>
</comment>
<comment type="pathway">
    <text>Amino-acid biosynthesis; L-lysine biosynthesis via AAA pathway; L-alpha-aminoadipate from 2-oxoglutarate: step 3/5.</text>
</comment>
<comment type="subcellular location">
    <subcellularLocation>
        <location evidence="1">Mitochondrion</location>
    </subcellularLocation>
</comment>
<comment type="similarity">
    <text evidence="4">Belongs to the aconitase/IPM isomerase family.</text>
</comment>
<accession>Q2HZ33</accession>
<protein>
    <recommendedName>
        <fullName>Homoaconitase, mitochondrial</fullName>
        <ecNumber>4.2.1.36</ecNumber>
    </recommendedName>
    <alternativeName>
        <fullName>Homoaconitate hydratase</fullName>
    </alternativeName>
</protein>
<proteinExistence type="inferred from homology"/>
<organism>
    <name type="scientific">Candida parapsilosis</name>
    <name type="common">Yeast</name>
    <dbReference type="NCBI Taxonomy" id="5480"/>
    <lineage>
        <taxon>Eukaryota</taxon>
        <taxon>Fungi</taxon>
        <taxon>Dikarya</taxon>
        <taxon>Ascomycota</taxon>
        <taxon>Saccharomycotina</taxon>
        <taxon>Pichiomycetes</taxon>
        <taxon>Debaryomycetaceae</taxon>
        <taxon>Candida/Lodderomyces clade</taxon>
        <taxon>Candida</taxon>
    </lineage>
</organism>
<sequence length="688" mass="74577">MRLHLHRFISTSTPLRSGQNLTEKIVQKYAVNLPPNKLVHTGDYVTIKPAHCMSHDNSWPVATKFMGLGAKRVKDNRQIVCTLDHDVQNKTEKNLAKYANIERFAKEQGIDFYPAGRGIGHQIMIEEGYAFPLNLTVASDSHSNTYGGVGSLGTPIVRTDAASIWATVQTWWQIPPVAKVELKGNLQNGVTGKDIIVALCGVFNNDEVLNHAIEFVGDGVENLPIDYRLTIANMTTEWGALSGLFPIDDKLIEFYEGRLQKLGPNHPRINKDTIEALRRGSLASDEDAKYAKHLVIDLNTLSPYVSGPNSVKVSNPLSKLSQDNIAINKAYLVSCTNSRLSDIQAAADVLKGHKVHPNVEFYVAAASSLVQQDAEAAGAWQTIIDAGAKPLPAGCGPCIGLGTGLLKDGEVGISATNRNFKGRMGSKDALAYLASPEVVAASAVLGKIGAPEEIDGKPVNASPEIVKSIDLPKSSGNTGATSEEPISEDDTSEASVEVLPGFPKSIQGELILCNADNINTDGIYPGKYTYQDDISREQMAEVCMENYDPEFKTKTKSDDIIISGYNFGTGSSREQAATCILARGMKLVVAGSFGNIFSRNSINNALLTLEIPELIEKLRVKYDGVNELTIRTGWFLKWDVTKALVTVADLDGEVILQQKVGELGTNLQDIIVKGGLEGWVKSELQKEQ</sequence>
<reference key="1">
    <citation type="submission" date="2006-01" db="EMBL/GenBank/DDBJ databases">
        <title>Candida parapsilosis LYS4 gene.</title>
        <authorList>
            <person name="Gavenciakova B."/>
            <person name="Kosa P."/>
            <person name="Nosek J."/>
        </authorList>
    </citation>
    <scope>NUCLEOTIDE SEQUENCE [GENOMIC DNA]</scope>
    <source>
        <strain>CBS 604</strain>
    </source>
</reference>
<feature type="transit peptide" description="Mitochondrion" evidence="2">
    <location>
        <begin position="1"/>
        <end status="unknown"/>
    </location>
</feature>
<feature type="chain" id="PRO_0000247920" description="Homoaconitase, mitochondrial">
    <location>
        <begin status="unknown"/>
        <end position="688"/>
    </location>
</feature>
<feature type="region of interest" description="Disordered" evidence="3">
    <location>
        <begin position="468"/>
        <end position="494"/>
    </location>
</feature>
<feature type="binding site" evidence="1">
    <location>
        <position position="335"/>
    </location>
    <ligand>
        <name>[4Fe-4S] cluster</name>
        <dbReference type="ChEBI" id="CHEBI:49883"/>
    </ligand>
</feature>
<feature type="binding site" evidence="1">
    <location>
        <position position="395"/>
    </location>
    <ligand>
        <name>[4Fe-4S] cluster</name>
        <dbReference type="ChEBI" id="CHEBI:49883"/>
    </ligand>
</feature>
<feature type="binding site" evidence="1">
    <location>
        <position position="398"/>
    </location>
    <ligand>
        <name>[4Fe-4S] cluster</name>
        <dbReference type="ChEBI" id="CHEBI:49883"/>
    </ligand>
</feature>
<dbReference type="EC" id="4.2.1.36"/>
<dbReference type="EMBL" id="DQ359726">
    <property type="protein sequence ID" value="ABC94604.1"/>
    <property type="molecule type" value="Genomic_DNA"/>
</dbReference>
<dbReference type="SMR" id="Q2HZ33"/>
<dbReference type="CGD" id="CAL0000151989">
    <property type="gene designation" value="CPAR2_500690"/>
</dbReference>
<dbReference type="VEuPathDB" id="FungiDB:CPAR2_500690"/>
<dbReference type="OrthoDB" id="10262323at2759"/>
<dbReference type="UniPathway" id="UPA00033">
    <property type="reaction ID" value="UER01027"/>
</dbReference>
<dbReference type="GO" id="GO:0005759">
    <property type="term" value="C:mitochondrial matrix"/>
    <property type="evidence" value="ECO:0007669"/>
    <property type="project" value="EnsemblFungi"/>
</dbReference>
<dbReference type="GO" id="GO:0051539">
    <property type="term" value="F:4 iron, 4 sulfur cluster binding"/>
    <property type="evidence" value="ECO:0007669"/>
    <property type="project" value="InterPro"/>
</dbReference>
<dbReference type="GO" id="GO:0004409">
    <property type="term" value="F:homoaconitate hydratase activity"/>
    <property type="evidence" value="ECO:0007669"/>
    <property type="project" value="UniProtKB-EC"/>
</dbReference>
<dbReference type="GO" id="GO:0046872">
    <property type="term" value="F:metal ion binding"/>
    <property type="evidence" value="ECO:0007669"/>
    <property type="project" value="UniProtKB-KW"/>
</dbReference>
<dbReference type="GO" id="GO:0019878">
    <property type="term" value="P:lysine biosynthetic process via aminoadipic acid"/>
    <property type="evidence" value="ECO:0007669"/>
    <property type="project" value="UniProtKB-UniPathway"/>
</dbReference>
<dbReference type="CDD" id="cd01582">
    <property type="entry name" value="Homoaconitase"/>
    <property type="match status" value="1"/>
</dbReference>
<dbReference type="CDD" id="cd01674">
    <property type="entry name" value="Homoaconitase_Swivel"/>
    <property type="match status" value="1"/>
</dbReference>
<dbReference type="FunFam" id="3.30.499.10:FF:000013">
    <property type="entry name" value="Homoaconitase, mitochondrial"/>
    <property type="match status" value="1"/>
</dbReference>
<dbReference type="Gene3D" id="3.30.499.10">
    <property type="entry name" value="Aconitase, domain 3"/>
    <property type="match status" value="2"/>
</dbReference>
<dbReference type="Gene3D" id="3.20.19.10">
    <property type="entry name" value="Aconitase, domain 4"/>
    <property type="match status" value="1"/>
</dbReference>
<dbReference type="InterPro" id="IPR015931">
    <property type="entry name" value="Acnase/IPM_dHydase_lsu_aba_1/3"/>
</dbReference>
<dbReference type="InterPro" id="IPR001030">
    <property type="entry name" value="Acoase/IPM_deHydtase_lsu_aba"/>
</dbReference>
<dbReference type="InterPro" id="IPR015928">
    <property type="entry name" value="Aconitase/3IPM_dehydase_swvl"/>
</dbReference>
<dbReference type="InterPro" id="IPR018136">
    <property type="entry name" value="Aconitase_4Fe-4S_BS"/>
</dbReference>
<dbReference type="InterPro" id="IPR036008">
    <property type="entry name" value="Aconitase_4Fe-4S_dom"/>
</dbReference>
<dbReference type="InterPro" id="IPR000573">
    <property type="entry name" value="AconitaseA/IPMdHydase_ssu_swvl"/>
</dbReference>
<dbReference type="InterPro" id="IPR004418">
    <property type="entry name" value="Homoaconitase_mito"/>
</dbReference>
<dbReference type="InterPro" id="IPR039386">
    <property type="entry name" value="Homoaconitase_swivel"/>
</dbReference>
<dbReference type="InterPro" id="IPR050067">
    <property type="entry name" value="IPM_dehydratase_rel_enz"/>
</dbReference>
<dbReference type="NCBIfam" id="TIGR00139">
    <property type="entry name" value="h_aconitase"/>
    <property type="match status" value="1"/>
</dbReference>
<dbReference type="PANTHER" id="PTHR43822:SF2">
    <property type="entry name" value="HOMOACONITASE, MITOCHONDRIAL"/>
    <property type="match status" value="1"/>
</dbReference>
<dbReference type="PANTHER" id="PTHR43822">
    <property type="entry name" value="HOMOACONITASE, MITOCHONDRIAL-RELATED"/>
    <property type="match status" value="1"/>
</dbReference>
<dbReference type="Pfam" id="PF00330">
    <property type="entry name" value="Aconitase"/>
    <property type="match status" value="1"/>
</dbReference>
<dbReference type="Pfam" id="PF00694">
    <property type="entry name" value="Aconitase_C"/>
    <property type="match status" value="1"/>
</dbReference>
<dbReference type="PRINTS" id="PR00415">
    <property type="entry name" value="ACONITASE"/>
</dbReference>
<dbReference type="SUPFAM" id="SSF53732">
    <property type="entry name" value="Aconitase iron-sulfur domain"/>
    <property type="match status" value="1"/>
</dbReference>
<dbReference type="SUPFAM" id="SSF52016">
    <property type="entry name" value="LeuD/IlvD-like"/>
    <property type="match status" value="1"/>
</dbReference>
<dbReference type="PROSITE" id="PS00450">
    <property type="entry name" value="ACONITASE_1"/>
    <property type="match status" value="1"/>
</dbReference>
<dbReference type="PROSITE" id="PS01244">
    <property type="entry name" value="ACONITASE_2"/>
    <property type="match status" value="1"/>
</dbReference>
<keyword id="KW-0028">Amino-acid biosynthesis</keyword>
<keyword id="KW-0408">Iron</keyword>
<keyword id="KW-0411">Iron-sulfur</keyword>
<keyword id="KW-0456">Lyase</keyword>
<keyword id="KW-0457">Lysine biosynthesis</keyword>
<keyword id="KW-0479">Metal-binding</keyword>
<keyword id="KW-0496">Mitochondrion</keyword>
<keyword id="KW-0809">Transit peptide</keyword>
<evidence type="ECO:0000250" key="1"/>
<evidence type="ECO:0000255" key="2"/>
<evidence type="ECO:0000256" key="3">
    <source>
        <dbReference type="SAM" id="MobiDB-lite"/>
    </source>
</evidence>
<evidence type="ECO:0000305" key="4"/>